<accession>Q044E2</accession>
<keyword id="KW-0687">Ribonucleoprotein</keyword>
<keyword id="KW-0689">Ribosomal protein</keyword>
<protein>
    <recommendedName>
        <fullName evidence="1">Large ribosomal subunit protein bL19</fullName>
    </recommendedName>
    <alternativeName>
        <fullName evidence="2">50S ribosomal protein L19</fullName>
    </alternativeName>
</protein>
<evidence type="ECO:0000255" key="1">
    <source>
        <dbReference type="HAMAP-Rule" id="MF_00402"/>
    </source>
</evidence>
<evidence type="ECO:0000305" key="2"/>
<gene>
    <name evidence="1" type="primary">rplS</name>
    <name type="ordered locus">LGAS_0789</name>
</gene>
<sequence length="116" mass="13351">MDPLIQELTKEQLRDDMPDFRAGDTVRVHVRVVEGTHERIQMFEGVVIKRKGAGISATYTVRKMSSGIGVERTFPVNDPRVAKVEVLRHGRVRRAKLYYLRERHGKAARIAEKRRG</sequence>
<organism>
    <name type="scientific">Lactobacillus gasseri (strain ATCC 33323 / DSM 20243 / BCRC 14619 / CIP 102991 / JCM 1131 / KCTC 3163 / NCIMB 11718 / NCTC 13722 / AM63)</name>
    <dbReference type="NCBI Taxonomy" id="324831"/>
    <lineage>
        <taxon>Bacteria</taxon>
        <taxon>Bacillati</taxon>
        <taxon>Bacillota</taxon>
        <taxon>Bacilli</taxon>
        <taxon>Lactobacillales</taxon>
        <taxon>Lactobacillaceae</taxon>
        <taxon>Lactobacillus</taxon>
    </lineage>
</organism>
<proteinExistence type="inferred from homology"/>
<name>RL19_LACGA</name>
<dbReference type="EMBL" id="CP000413">
    <property type="protein sequence ID" value="ABJ60180.1"/>
    <property type="status" value="ALT_INIT"/>
    <property type="molecule type" value="Genomic_DNA"/>
</dbReference>
<dbReference type="RefSeq" id="WP_003647502.1">
    <property type="nucleotide sequence ID" value="NZ_WBMG01000005.1"/>
</dbReference>
<dbReference type="SMR" id="Q044E2"/>
<dbReference type="GeneID" id="83570161"/>
<dbReference type="KEGG" id="lga:LGAS_0789"/>
<dbReference type="HOGENOM" id="CLU_103507_2_1_9"/>
<dbReference type="BioCyc" id="LGAS324831:G1G6Y-783-MONOMER"/>
<dbReference type="Proteomes" id="UP000000664">
    <property type="component" value="Chromosome"/>
</dbReference>
<dbReference type="GO" id="GO:0022625">
    <property type="term" value="C:cytosolic large ribosomal subunit"/>
    <property type="evidence" value="ECO:0007669"/>
    <property type="project" value="TreeGrafter"/>
</dbReference>
<dbReference type="GO" id="GO:0003735">
    <property type="term" value="F:structural constituent of ribosome"/>
    <property type="evidence" value="ECO:0007669"/>
    <property type="project" value="InterPro"/>
</dbReference>
<dbReference type="GO" id="GO:0006412">
    <property type="term" value="P:translation"/>
    <property type="evidence" value="ECO:0007669"/>
    <property type="project" value="UniProtKB-UniRule"/>
</dbReference>
<dbReference type="FunFam" id="2.30.30.790:FF:000001">
    <property type="entry name" value="50S ribosomal protein L19"/>
    <property type="match status" value="1"/>
</dbReference>
<dbReference type="Gene3D" id="2.30.30.790">
    <property type="match status" value="1"/>
</dbReference>
<dbReference type="HAMAP" id="MF_00402">
    <property type="entry name" value="Ribosomal_bL19"/>
    <property type="match status" value="1"/>
</dbReference>
<dbReference type="InterPro" id="IPR001857">
    <property type="entry name" value="Ribosomal_bL19"/>
</dbReference>
<dbReference type="InterPro" id="IPR018257">
    <property type="entry name" value="Ribosomal_bL19_CS"/>
</dbReference>
<dbReference type="InterPro" id="IPR038657">
    <property type="entry name" value="Ribosomal_bL19_sf"/>
</dbReference>
<dbReference type="InterPro" id="IPR008991">
    <property type="entry name" value="Translation_prot_SH3-like_sf"/>
</dbReference>
<dbReference type="NCBIfam" id="TIGR01024">
    <property type="entry name" value="rplS_bact"/>
    <property type="match status" value="1"/>
</dbReference>
<dbReference type="PANTHER" id="PTHR15680:SF9">
    <property type="entry name" value="LARGE RIBOSOMAL SUBUNIT PROTEIN BL19M"/>
    <property type="match status" value="1"/>
</dbReference>
<dbReference type="PANTHER" id="PTHR15680">
    <property type="entry name" value="RIBOSOMAL PROTEIN L19"/>
    <property type="match status" value="1"/>
</dbReference>
<dbReference type="Pfam" id="PF01245">
    <property type="entry name" value="Ribosomal_L19"/>
    <property type="match status" value="1"/>
</dbReference>
<dbReference type="PIRSF" id="PIRSF002191">
    <property type="entry name" value="Ribosomal_L19"/>
    <property type="match status" value="1"/>
</dbReference>
<dbReference type="PRINTS" id="PR00061">
    <property type="entry name" value="RIBOSOMALL19"/>
</dbReference>
<dbReference type="SUPFAM" id="SSF50104">
    <property type="entry name" value="Translation proteins SH3-like domain"/>
    <property type="match status" value="1"/>
</dbReference>
<dbReference type="PROSITE" id="PS01015">
    <property type="entry name" value="RIBOSOMAL_L19"/>
    <property type="match status" value="1"/>
</dbReference>
<reference key="1">
    <citation type="journal article" date="2006" name="Proc. Natl. Acad. Sci. U.S.A.">
        <title>Comparative genomics of the lactic acid bacteria.</title>
        <authorList>
            <person name="Makarova K.S."/>
            <person name="Slesarev A."/>
            <person name="Wolf Y.I."/>
            <person name="Sorokin A."/>
            <person name="Mirkin B."/>
            <person name="Koonin E.V."/>
            <person name="Pavlov A."/>
            <person name="Pavlova N."/>
            <person name="Karamychev V."/>
            <person name="Polouchine N."/>
            <person name="Shakhova V."/>
            <person name="Grigoriev I."/>
            <person name="Lou Y."/>
            <person name="Rohksar D."/>
            <person name="Lucas S."/>
            <person name="Huang K."/>
            <person name="Goodstein D.M."/>
            <person name="Hawkins T."/>
            <person name="Plengvidhya V."/>
            <person name="Welker D."/>
            <person name="Hughes J."/>
            <person name="Goh Y."/>
            <person name="Benson A."/>
            <person name="Baldwin K."/>
            <person name="Lee J.-H."/>
            <person name="Diaz-Muniz I."/>
            <person name="Dosti B."/>
            <person name="Smeianov V."/>
            <person name="Wechter W."/>
            <person name="Barabote R."/>
            <person name="Lorca G."/>
            <person name="Altermann E."/>
            <person name="Barrangou R."/>
            <person name="Ganesan B."/>
            <person name="Xie Y."/>
            <person name="Rawsthorne H."/>
            <person name="Tamir D."/>
            <person name="Parker C."/>
            <person name="Breidt F."/>
            <person name="Broadbent J.R."/>
            <person name="Hutkins R."/>
            <person name="O'Sullivan D."/>
            <person name="Steele J."/>
            <person name="Unlu G."/>
            <person name="Saier M.H. Jr."/>
            <person name="Klaenhammer T."/>
            <person name="Richardson P."/>
            <person name="Kozyavkin S."/>
            <person name="Weimer B.C."/>
            <person name="Mills D.A."/>
        </authorList>
    </citation>
    <scope>NUCLEOTIDE SEQUENCE [LARGE SCALE GENOMIC DNA]</scope>
    <source>
        <strain>ATCC 33323 / DSM 20243 / BCRC 14619 / CIP 102991 / JCM 1131 / KCTC 3163 / NCIMB 11718 / NCTC 13722 / AM63</strain>
    </source>
</reference>
<feature type="chain" id="PRO_0000340737" description="Large ribosomal subunit protein bL19">
    <location>
        <begin position="1"/>
        <end position="116"/>
    </location>
</feature>
<comment type="function">
    <text evidence="1">This protein is located at the 30S-50S ribosomal subunit interface and may play a role in the structure and function of the aminoacyl-tRNA binding site.</text>
</comment>
<comment type="similarity">
    <text evidence="1">Belongs to the bacterial ribosomal protein bL19 family.</text>
</comment>
<comment type="sequence caution" evidence="2">
    <conflict type="erroneous initiation">
        <sequence resource="EMBL-CDS" id="ABJ60180"/>
    </conflict>
</comment>